<protein>
    <recommendedName>
        <fullName evidence="1">7-cyano-7-deazaguanine synthase</fullName>
        <ecNumber evidence="1">6.3.4.20</ecNumber>
    </recommendedName>
    <alternativeName>
        <fullName evidence="1">7-cyano-7-carbaguanine synthase</fullName>
    </alternativeName>
    <alternativeName>
        <fullName evidence="1">PreQ(0) synthase</fullName>
    </alternativeName>
    <alternativeName>
        <fullName evidence="1">Queuosine biosynthesis protein QueC</fullName>
    </alternativeName>
</protein>
<feature type="chain" id="PRO_1000186583" description="7-cyano-7-deazaguanine synthase">
    <location>
        <begin position="1"/>
        <end position="233"/>
    </location>
</feature>
<feature type="binding site" evidence="1">
    <location>
        <begin position="13"/>
        <end position="23"/>
    </location>
    <ligand>
        <name>ATP</name>
        <dbReference type="ChEBI" id="CHEBI:30616"/>
    </ligand>
</feature>
<feature type="binding site" evidence="1">
    <location>
        <position position="197"/>
    </location>
    <ligand>
        <name>Zn(2+)</name>
        <dbReference type="ChEBI" id="CHEBI:29105"/>
    </ligand>
</feature>
<feature type="binding site" evidence="1">
    <location>
        <position position="207"/>
    </location>
    <ligand>
        <name>Zn(2+)</name>
        <dbReference type="ChEBI" id="CHEBI:29105"/>
    </ligand>
</feature>
<feature type="binding site" evidence="1">
    <location>
        <position position="210"/>
    </location>
    <ligand>
        <name>Zn(2+)</name>
        <dbReference type="ChEBI" id="CHEBI:29105"/>
    </ligand>
</feature>
<feature type="binding site" evidence="1">
    <location>
        <position position="213"/>
    </location>
    <ligand>
        <name>Zn(2+)</name>
        <dbReference type="ChEBI" id="CHEBI:29105"/>
    </ligand>
</feature>
<reference key="1">
    <citation type="journal article" date="2012" name="Environ. Microbiol.">
        <title>The genome sequence of Desulfatibacillum alkenivorans AK-01: a blueprint for anaerobic alkane oxidation.</title>
        <authorList>
            <person name="Callaghan A.V."/>
            <person name="Morris B.E."/>
            <person name="Pereira I.A."/>
            <person name="McInerney M.J."/>
            <person name="Austin R.N."/>
            <person name="Groves J.T."/>
            <person name="Kukor J.J."/>
            <person name="Suflita J.M."/>
            <person name="Young L.Y."/>
            <person name="Zylstra G.J."/>
            <person name="Wawrik B."/>
        </authorList>
    </citation>
    <scope>NUCLEOTIDE SEQUENCE [LARGE SCALE GENOMIC DNA]</scope>
    <source>
        <strain>AK-01</strain>
    </source>
</reference>
<accession>B8FMW6</accession>
<dbReference type="EC" id="6.3.4.20" evidence="1"/>
<dbReference type="EMBL" id="CP001322">
    <property type="protein sequence ID" value="ACL05836.1"/>
    <property type="molecule type" value="Genomic_DNA"/>
</dbReference>
<dbReference type="RefSeq" id="WP_015948883.1">
    <property type="nucleotide sequence ID" value="NC_011768.1"/>
</dbReference>
<dbReference type="SMR" id="B8FMW6"/>
<dbReference type="KEGG" id="dal:Dalk_4152"/>
<dbReference type="eggNOG" id="COG0603">
    <property type="taxonomic scope" value="Bacteria"/>
</dbReference>
<dbReference type="HOGENOM" id="CLU_081854_1_1_7"/>
<dbReference type="UniPathway" id="UPA00391"/>
<dbReference type="Proteomes" id="UP000000739">
    <property type="component" value="Chromosome"/>
</dbReference>
<dbReference type="GO" id="GO:0005524">
    <property type="term" value="F:ATP binding"/>
    <property type="evidence" value="ECO:0007669"/>
    <property type="project" value="UniProtKB-UniRule"/>
</dbReference>
<dbReference type="GO" id="GO:0016879">
    <property type="term" value="F:ligase activity, forming carbon-nitrogen bonds"/>
    <property type="evidence" value="ECO:0007669"/>
    <property type="project" value="UniProtKB-UniRule"/>
</dbReference>
<dbReference type="GO" id="GO:0008270">
    <property type="term" value="F:zinc ion binding"/>
    <property type="evidence" value="ECO:0007669"/>
    <property type="project" value="UniProtKB-UniRule"/>
</dbReference>
<dbReference type="GO" id="GO:0008616">
    <property type="term" value="P:queuosine biosynthetic process"/>
    <property type="evidence" value="ECO:0007669"/>
    <property type="project" value="UniProtKB-UniRule"/>
</dbReference>
<dbReference type="CDD" id="cd01995">
    <property type="entry name" value="QueC-like"/>
    <property type="match status" value="1"/>
</dbReference>
<dbReference type="FunFam" id="3.40.50.620:FF:000131">
    <property type="entry name" value="7-cyano-7-deazaguanine synthase"/>
    <property type="match status" value="1"/>
</dbReference>
<dbReference type="Gene3D" id="3.40.50.620">
    <property type="entry name" value="HUPs"/>
    <property type="match status" value="1"/>
</dbReference>
<dbReference type="HAMAP" id="MF_01633">
    <property type="entry name" value="QueC"/>
    <property type="match status" value="1"/>
</dbReference>
<dbReference type="InterPro" id="IPR018317">
    <property type="entry name" value="QueC"/>
</dbReference>
<dbReference type="InterPro" id="IPR014729">
    <property type="entry name" value="Rossmann-like_a/b/a_fold"/>
</dbReference>
<dbReference type="NCBIfam" id="TIGR00364">
    <property type="entry name" value="7-cyano-7-deazaguanine synthase QueC"/>
    <property type="match status" value="1"/>
</dbReference>
<dbReference type="PANTHER" id="PTHR42914">
    <property type="entry name" value="7-CYANO-7-DEAZAGUANINE SYNTHASE"/>
    <property type="match status" value="1"/>
</dbReference>
<dbReference type="PANTHER" id="PTHR42914:SF1">
    <property type="entry name" value="7-CYANO-7-DEAZAGUANINE SYNTHASE"/>
    <property type="match status" value="1"/>
</dbReference>
<dbReference type="Pfam" id="PF06508">
    <property type="entry name" value="QueC"/>
    <property type="match status" value="1"/>
</dbReference>
<dbReference type="PIRSF" id="PIRSF006293">
    <property type="entry name" value="ExsB"/>
    <property type="match status" value="1"/>
</dbReference>
<dbReference type="SUPFAM" id="SSF52402">
    <property type="entry name" value="Adenine nucleotide alpha hydrolases-like"/>
    <property type="match status" value="1"/>
</dbReference>
<comment type="function">
    <text evidence="1">Catalyzes the ATP-dependent conversion of 7-carboxy-7-deazaguanine (CDG) to 7-cyano-7-deazaguanine (preQ(0)).</text>
</comment>
<comment type="catalytic activity">
    <reaction evidence="1">
        <text>7-carboxy-7-deazaguanine + NH4(+) + ATP = 7-cyano-7-deazaguanine + ADP + phosphate + H2O + H(+)</text>
        <dbReference type="Rhea" id="RHEA:27982"/>
        <dbReference type="ChEBI" id="CHEBI:15377"/>
        <dbReference type="ChEBI" id="CHEBI:15378"/>
        <dbReference type="ChEBI" id="CHEBI:28938"/>
        <dbReference type="ChEBI" id="CHEBI:30616"/>
        <dbReference type="ChEBI" id="CHEBI:43474"/>
        <dbReference type="ChEBI" id="CHEBI:45075"/>
        <dbReference type="ChEBI" id="CHEBI:61036"/>
        <dbReference type="ChEBI" id="CHEBI:456216"/>
        <dbReference type="EC" id="6.3.4.20"/>
    </reaction>
</comment>
<comment type="cofactor">
    <cofactor evidence="1">
        <name>Zn(2+)</name>
        <dbReference type="ChEBI" id="CHEBI:29105"/>
    </cofactor>
    <text evidence="1">Binds 1 zinc ion per subunit.</text>
</comment>
<comment type="pathway">
    <text evidence="1">Purine metabolism; 7-cyano-7-deazaguanine biosynthesis.</text>
</comment>
<comment type="similarity">
    <text evidence="1">Belongs to the QueC family.</text>
</comment>
<keyword id="KW-0067">ATP-binding</keyword>
<keyword id="KW-0436">Ligase</keyword>
<keyword id="KW-0479">Metal-binding</keyword>
<keyword id="KW-0547">Nucleotide-binding</keyword>
<keyword id="KW-0671">Queuosine biosynthesis</keyword>
<keyword id="KW-1185">Reference proteome</keyword>
<keyword id="KW-0862">Zinc</keyword>
<proteinExistence type="inferred from homology"/>
<sequence>MNAIQKEKAVVLLSGGLDSATAMAIAKDMGFQVYALSFSYGQRHTTELEAAKRVAKTLGAVEHQVANIDLTCFGGSALTADLDVPKGRAPEDMEKEIPVTYVPARNTIFLSFALAWAEVLETSHIFIGVNAVDYSGYPDCRPEYIQAFTAMANLATKAGVEGRTKIEIHTPLIDLTKAQIIQKGIALGVDYGLTHSCYDPSPEGLACGQCDSCLLRKKGFAEAGIPDPTKYIP</sequence>
<organism>
    <name type="scientific">Desulfatibacillum aliphaticivorans</name>
    <dbReference type="NCBI Taxonomy" id="218208"/>
    <lineage>
        <taxon>Bacteria</taxon>
        <taxon>Pseudomonadati</taxon>
        <taxon>Thermodesulfobacteriota</taxon>
        <taxon>Desulfobacteria</taxon>
        <taxon>Desulfobacterales</taxon>
        <taxon>Desulfatibacillaceae</taxon>
        <taxon>Desulfatibacillum</taxon>
    </lineage>
</organism>
<gene>
    <name evidence="1" type="primary">queC</name>
    <name type="ordered locus">Dalk_4152</name>
</gene>
<name>QUEC_DESAL</name>
<evidence type="ECO:0000255" key="1">
    <source>
        <dbReference type="HAMAP-Rule" id="MF_01633"/>
    </source>
</evidence>